<dbReference type="EC" id="2.3.1.-"/>
<dbReference type="EMBL" id="EU551165">
    <property type="protein sequence ID" value="ACD76855.1"/>
    <property type="molecule type" value="mRNA"/>
</dbReference>
<dbReference type="SMR" id="F1LKH8"/>
<dbReference type="Proteomes" id="UP000596661">
    <property type="component" value="Unplaced"/>
</dbReference>
<dbReference type="GO" id="GO:0005737">
    <property type="term" value="C:cytoplasm"/>
    <property type="evidence" value="ECO:0007669"/>
    <property type="project" value="UniProtKB-SubCell"/>
</dbReference>
<dbReference type="GO" id="GO:0016747">
    <property type="term" value="F:acyltransferase activity, transferring groups other than amino-acyl groups"/>
    <property type="evidence" value="ECO:0007669"/>
    <property type="project" value="InterPro"/>
</dbReference>
<dbReference type="GO" id="GO:0030639">
    <property type="term" value="P:polyketide biosynthetic process"/>
    <property type="evidence" value="ECO:0007669"/>
    <property type="project" value="TreeGrafter"/>
</dbReference>
<dbReference type="CDD" id="cd00831">
    <property type="entry name" value="CHS_like"/>
    <property type="match status" value="1"/>
</dbReference>
<dbReference type="FunFam" id="3.40.47.10:FF:000014">
    <property type="entry name" value="Chalcone synthase 1"/>
    <property type="match status" value="1"/>
</dbReference>
<dbReference type="FunFam" id="3.40.47.10:FF:000025">
    <property type="entry name" value="Chalcone synthase 2"/>
    <property type="match status" value="1"/>
</dbReference>
<dbReference type="Gene3D" id="3.40.47.10">
    <property type="match status" value="2"/>
</dbReference>
<dbReference type="InterPro" id="IPR012328">
    <property type="entry name" value="Chalcone/stilbene_synt_C"/>
</dbReference>
<dbReference type="InterPro" id="IPR001099">
    <property type="entry name" value="Chalcone/stilbene_synt_N"/>
</dbReference>
<dbReference type="InterPro" id="IPR018088">
    <property type="entry name" value="Chalcone/stilbene_synthase_AS"/>
</dbReference>
<dbReference type="InterPro" id="IPR011141">
    <property type="entry name" value="Polyketide_synthase_type-III"/>
</dbReference>
<dbReference type="InterPro" id="IPR016039">
    <property type="entry name" value="Thiolase-like"/>
</dbReference>
<dbReference type="PANTHER" id="PTHR11877:SF14">
    <property type="entry name" value="CHALCONE SYNTHASE"/>
    <property type="match status" value="1"/>
</dbReference>
<dbReference type="PANTHER" id="PTHR11877">
    <property type="entry name" value="HYDROXYMETHYLGLUTARYL-COA SYNTHASE"/>
    <property type="match status" value="1"/>
</dbReference>
<dbReference type="Pfam" id="PF02797">
    <property type="entry name" value="Chal_sti_synt_C"/>
    <property type="match status" value="1"/>
</dbReference>
<dbReference type="Pfam" id="PF00195">
    <property type="entry name" value="Chal_sti_synt_N"/>
    <property type="match status" value="1"/>
</dbReference>
<dbReference type="PIRSF" id="PIRSF000451">
    <property type="entry name" value="PKS_III"/>
    <property type="match status" value="1"/>
</dbReference>
<dbReference type="SUPFAM" id="SSF53901">
    <property type="entry name" value="Thiolase-like"/>
    <property type="match status" value="2"/>
</dbReference>
<dbReference type="PROSITE" id="PS00441">
    <property type="entry name" value="CHALCONE_SYNTH"/>
    <property type="match status" value="1"/>
</dbReference>
<evidence type="ECO:0000250" key="1"/>
<evidence type="ECO:0000255" key="2">
    <source>
        <dbReference type="PROSITE-ProRule" id="PRU10023"/>
    </source>
</evidence>
<evidence type="ECO:0000269" key="3">
    <source>
    </source>
</evidence>
<evidence type="ECO:0000305" key="4"/>
<keyword id="KW-0012">Acyltransferase</keyword>
<keyword id="KW-0963">Cytoplasm</keyword>
<keyword id="KW-0808">Transferase</keyword>
<organism>
    <name type="scientific">Cannabis sativa</name>
    <name type="common">Hemp</name>
    <name type="synonym">Marijuana</name>
    <dbReference type="NCBI Taxonomy" id="3483"/>
    <lineage>
        <taxon>Eukaryota</taxon>
        <taxon>Viridiplantae</taxon>
        <taxon>Streptophyta</taxon>
        <taxon>Embryophyta</taxon>
        <taxon>Tracheophyta</taxon>
        <taxon>Spermatophyta</taxon>
        <taxon>Magnoliopsida</taxon>
        <taxon>eudicotyledons</taxon>
        <taxon>Gunneridae</taxon>
        <taxon>Pentapetalae</taxon>
        <taxon>rosids</taxon>
        <taxon>fabids</taxon>
        <taxon>Rosales</taxon>
        <taxon>Cannabaceae</taxon>
        <taxon>Cannabis</taxon>
    </lineage>
</organism>
<name>PKSG4_CANSA</name>
<feature type="chain" id="PRO_0000421151" description="Polyketide synthase 4">
    <location>
        <begin position="1"/>
        <end position="385"/>
    </location>
</feature>
<feature type="active site" evidence="2">
    <location>
        <position position="157"/>
    </location>
</feature>
<protein>
    <recommendedName>
        <fullName>Polyketide synthase 4</fullName>
        <ecNumber>2.3.1.-</ecNumber>
    </recommendedName>
</protein>
<comment type="function">
    <text evidence="1">Polyketide synthase responsible for the biosynthesis of secondary metabolites.</text>
</comment>
<comment type="subcellular location">
    <subcellularLocation>
        <location evidence="4">Cytoplasm</location>
    </subcellularLocation>
</comment>
<comment type="tissue specificity">
    <text evidence="3">Expressed in glandular trichomes.</text>
</comment>
<comment type="similarity">
    <text evidence="4">Belongs to the thiolase-like superfamily. Chalcone/stilbene synthases family.</text>
</comment>
<sequence length="385" mass="42604">MNHLRAEGPASVLAIGTANPENILIQDEFPDYYFRVTKSEHMTQLKEKFRKICDKSMIRKRNCFLNEEHLKQNPRLVEHEMQTLDARQDMLVVEVPKLGKDACAKAIKEWGQPKSKITHLIFTSASTTDMPGADYHCAKLLGLSPSVKRVMMYQLGCYGGGTVLRIAKDIAENNKGARVLAVCCDIMACLFRGPSDSDLELLVGQAIFGDGAAAVIVGAEPDESVGERPIFELVSTGQTILPNSEGTIGGHIREAGLIFDLHKDVPMLISNNIEKCLIEAFTPIGISDWNSIFWITHPGGKAILDKVEEKLDLKKEKFVDSRHVLSEHGNMSSSTVLFVMDELRKRSLEEGKSTTGDGFEWGVLFGFGPGLTVERVVVRSVPIKY</sequence>
<gene>
    <name type="primary">PKSG4</name>
</gene>
<accession>F1LKH8</accession>
<reference key="1">
    <citation type="journal article" date="2010" name="Genet. Mol. Biol.">
        <title>In silicio expression analysis of PKS genes isolated from Cannabis sativa L.</title>
        <authorList>
            <person name="Flores-Sanchez I.J."/>
            <person name="Linthorst H.J."/>
            <person name="Verpoorte R."/>
        </authorList>
    </citation>
    <scope>NUCLEOTIDE SEQUENCE [MRNA]</scope>
    <scope>3D-STRUCTURE MODELING</scope>
    <scope>TISSUE SPECIFICITY</scope>
</reference>
<proteinExistence type="evidence at transcript level"/>